<name>ATPB_RUTMC</name>
<protein>
    <recommendedName>
        <fullName evidence="1">ATP synthase subunit beta</fullName>
        <ecNumber evidence="1">7.1.2.2</ecNumber>
    </recommendedName>
    <alternativeName>
        <fullName evidence="1">ATP synthase F1 sector subunit beta</fullName>
    </alternativeName>
    <alternativeName>
        <fullName evidence="1">F-ATPase subunit beta</fullName>
    </alternativeName>
</protein>
<comment type="function">
    <text evidence="1">Produces ATP from ADP in the presence of a proton gradient across the membrane. The catalytic sites are hosted primarily by the beta subunits.</text>
</comment>
<comment type="catalytic activity">
    <reaction evidence="1">
        <text>ATP + H2O + 4 H(+)(in) = ADP + phosphate + 5 H(+)(out)</text>
        <dbReference type="Rhea" id="RHEA:57720"/>
        <dbReference type="ChEBI" id="CHEBI:15377"/>
        <dbReference type="ChEBI" id="CHEBI:15378"/>
        <dbReference type="ChEBI" id="CHEBI:30616"/>
        <dbReference type="ChEBI" id="CHEBI:43474"/>
        <dbReference type="ChEBI" id="CHEBI:456216"/>
        <dbReference type="EC" id="7.1.2.2"/>
    </reaction>
</comment>
<comment type="subunit">
    <text evidence="1">F-type ATPases have 2 components, CF(1) - the catalytic core - and CF(0) - the membrane proton channel. CF(1) has five subunits: alpha(3), beta(3), gamma(1), delta(1), epsilon(1). CF(0) has three main subunits: a(1), b(2) and c(9-12). The alpha and beta chains form an alternating ring which encloses part of the gamma chain. CF(1) is attached to CF(0) by a central stalk formed by the gamma and epsilon chains, while a peripheral stalk is formed by the delta and b chains.</text>
</comment>
<comment type="subcellular location">
    <subcellularLocation>
        <location evidence="1">Cell inner membrane</location>
        <topology evidence="1">Peripheral membrane protein</topology>
    </subcellularLocation>
</comment>
<comment type="similarity">
    <text evidence="1">Belongs to the ATPase alpha/beta chains family.</text>
</comment>
<keyword id="KW-0066">ATP synthesis</keyword>
<keyword id="KW-0067">ATP-binding</keyword>
<keyword id="KW-0997">Cell inner membrane</keyword>
<keyword id="KW-1003">Cell membrane</keyword>
<keyword id="KW-0139">CF(1)</keyword>
<keyword id="KW-0375">Hydrogen ion transport</keyword>
<keyword id="KW-0406">Ion transport</keyword>
<keyword id="KW-0472">Membrane</keyword>
<keyword id="KW-0547">Nucleotide-binding</keyword>
<keyword id="KW-1278">Translocase</keyword>
<keyword id="KW-0813">Transport</keyword>
<reference key="1">
    <citation type="journal article" date="2007" name="Science">
        <title>The Calyptogena magnifica chemoautotrophic symbiont genome.</title>
        <authorList>
            <person name="Newton I.L.G."/>
            <person name="Woyke T."/>
            <person name="Auchtung T.A."/>
            <person name="Dilly G.F."/>
            <person name="Dutton R.J."/>
            <person name="Fisher M.C."/>
            <person name="Fontanez K.M."/>
            <person name="Lau E."/>
            <person name="Stewart F.J."/>
            <person name="Richardson P.M."/>
            <person name="Barry K.W."/>
            <person name="Saunders E."/>
            <person name="Detter J.C."/>
            <person name="Wu D."/>
            <person name="Eisen J.A."/>
            <person name="Cavanaugh C.M."/>
        </authorList>
    </citation>
    <scope>NUCLEOTIDE SEQUENCE [LARGE SCALE GENOMIC DNA]</scope>
</reference>
<sequence length="459" mass="49908">MNTGKITQIIGAVIDVEFSVDSMPKIYDALKVSETGLTLEVQQQLGDYVVRTIAMGGSEGLKRGLKVTNTGGPIKVPVGVKTLGRIMNVLGEPIDNAGDIGQEVSWAIHRSAPAYHELAPAAELLETGIKVIDLICPFAKGGKVGLFGGAGVGKTVNMMELIRNIAIEHSGYSVFSGVGERTREGNDFYHEMKESNVLDKVSLVYGQMNEPPGNRLRVALTGLTMAEYFRDEGHDVLLFIDNIYRYTLAGTEVSALLGRMPSAVGYQPTLASEMGALQERITSTKKGSITSIQAVYVPADDLTDPSPATTFAHLDATVVLSRQVAELGIYPAVDPLDSTSRQLDPLIVGEEHYNVARGVQSVLQRYKELKDIIAILGMDELSEEDKHSVSRARKIQRFLSQPFFVAEVFTGAPGKYVSLKDTIVGFKAILDGEMDDFPEQAFYMIGSIEEVRETNKEGL</sequence>
<organism>
    <name type="scientific">Ruthia magnifica subsp. Calyptogena magnifica</name>
    <dbReference type="NCBI Taxonomy" id="413404"/>
    <lineage>
        <taxon>Bacteria</taxon>
        <taxon>Pseudomonadati</taxon>
        <taxon>Pseudomonadota</taxon>
        <taxon>Gammaproteobacteria</taxon>
        <taxon>Candidatus Pseudothioglobaceae</taxon>
        <taxon>Candidatus Ruthturnera</taxon>
    </lineage>
</organism>
<gene>
    <name evidence="1" type="primary">atpD</name>
    <name type="ordered locus">Rmag_1045</name>
</gene>
<dbReference type="EC" id="7.1.2.2" evidence="1"/>
<dbReference type="EMBL" id="CP000488">
    <property type="protein sequence ID" value="ABL02749.1"/>
    <property type="molecule type" value="Genomic_DNA"/>
</dbReference>
<dbReference type="RefSeq" id="WP_011738374.1">
    <property type="nucleotide sequence ID" value="NC_008610.1"/>
</dbReference>
<dbReference type="SMR" id="A1AXU2"/>
<dbReference type="STRING" id="413404.Rmag_1045"/>
<dbReference type="KEGG" id="rma:Rmag_1045"/>
<dbReference type="eggNOG" id="COG0055">
    <property type="taxonomic scope" value="Bacteria"/>
</dbReference>
<dbReference type="HOGENOM" id="CLU_022398_0_2_6"/>
<dbReference type="OrthoDB" id="9801639at2"/>
<dbReference type="Proteomes" id="UP000002587">
    <property type="component" value="Chromosome"/>
</dbReference>
<dbReference type="GO" id="GO:0005886">
    <property type="term" value="C:plasma membrane"/>
    <property type="evidence" value="ECO:0007669"/>
    <property type="project" value="UniProtKB-SubCell"/>
</dbReference>
<dbReference type="GO" id="GO:0045259">
    <property type="term" value="C:proton-transporting ATP synthase complex"/>
    <property type="evidence" value="ECO:0007669"/>
    <property type="project" value="UniProtKB-KW"/>
</dbReference>
<dbReference type="GO" id="GO:0005524">
    <property type="term" value="F:ATP binding"/>
    <property type="evidence" value="ECO:0007669"/>
    <property type="project" value="UniProtKB-UniRule"/>
</dbReference>
<dbReference type="GO" id="GO:0016887">
    <property type="term" value="F:ATP hydrolysis activity"/>
    <property type="evidence" value="ECO:0007669"/>
    <property type="project" value="InterPro"/>
</dbReference>
<dbReference type="GO" id="GO:0046933">
    <property type="term" value="F:proton-transporting ATP synthase activity, rotational mechanism"/>
    <property type="evidence" value="ECO:0007669"/>
    <property type="project" value="UniProtKB-UniRule"/>
</dbReference>
<dbReference type="CDD" id="cd18110">
    <property type="entry name" value="ATP-synt_F1_beta_C"/>
    <property type="match status" value="1"/>
</dbReference>
<dbReference type="CDD" id="cd18115">
    <property type="entry name" value="ATP-synt_F1_beta_N"/>
    <property type="match status" value="1"/>
</dbReference>
<dbReference type="CDD" id="cd01133">
    <property type="entry name" value="F1-ATPase_beta_CD"/>
    <property type="match status" value="1"/>
</dbReference>
<dbReference type="FunFam" id="1.10.1140.10:FF:000001">
    <property type="entry name" value="ATP synthase subunit beta"/>
    <property type="match status" value="1"/>
</dbReference>
<dbReference type="FunFam" id="3.40.50.300:FF:000004">
    <property type="entry name" value="ATP synthase subunit beta"/>
    <property type="match status" value="1"/>
</dbReference>
<dbReference type="Gene3D" id="2.40.10.170">
    <property type="match status" value="1"/>
</dbReference>
<dbReference type="Gene3D" id="1.10.1140.10">
    <property type="entry name" value="Bovine Mitochondrial F1-atpase, Atp Synthase Beta Chain, Chain D, domain 3"/>
    <property type="match status" value="1"/>
</dbReference>
<dbReference type="Gene3D" id="3.40.50.300">
    <property type="entry name" value="P-loop containing nucleotide triphosphate hydrolases"/>
    <property type="match status" value="1"/>
</dbReference>
<dbReference type="HAMAP" id="MF_01347">
    <property type="entry name" value="ATP_synth_beta_bact"/>
    <property type="match status" value="1"/>
</dbReference>
<dbReference type="InterPro" id="IPR003593">
    <property type="entry name" value="AAA+_ATPase"/>
</dbReference>
<dbReference type="InterPro" id="IPR055190">
    <property type="entry name" value="ATP-synt_VA_C"/>
</dbReference>
<dbReference type="InterPro" id="IPR005722">
    <property type="entry name" value="ATP_synth_F1_bsu"/>
</dbReference>
<dbReference type="InterPro" id="IPR020003">
    <property type="entry name" value="ATPase_a/bsu_AS"/>
</dbReference>
<dbReference type="InterPro" id="IPR050053">
    <property type="entry name" value="ATPase_alpha/beta_chains"/>
</dbReference>
<dbReference type="InterPro" id="IPR004100">
    <property type="entry name" value="ATPase_F1/V1/A1_a/bsu_N"/>
</dbReference>
<dbReference type="InterPro" id="IPR036121">
    <property type="entry name" value="ATPase_F1/V1/A1_a/bsu_N_sf"/>
</dbReference>
<dbReference type="InterPro" id="IPR000194">
    <property type="entry name" value="ATPase_F1/V1/A1_a/bsu_nucl-bd"/>
</dbReference>
<dbReference type="InterPro" id="IPR024034">
    <property type="entry name" value="ATPase_F1/V1_b/a_C"/>
</dbReference>
<dbReference type="InterPro" id="IPR027417">
    <property type="entry name" value="P-loop_NTPase"/>
</dbReference>
<dbReference type="NCBIfam" id="TIGR01039">
    <property type="entry name" value="atpD"/>
    <property type="match status" value="1"/>
</dbReference>
<dbReference type="PANTHER" id="PTHR15184">
    <property type="entry name" value="ATP SYNTHASE"/>
    <property type="match status" value="1"/>
</dbReference>
<dbReference type="PANTHER" id="PTHR15184:SF71">
    <property type="entry name" value="ATP SYNTHASE SUBUNIT BETA, MITOCHONDRIAL"/>
    <property type="match status" value="1"/>
</dbReference>
<dbReference type="Pfam" id="PF00006">
    <property type="entry name" value="ATP-synt_ab"/>
    <property type="match status" value="1"/>
</dbReference>
<dbReference type="Pfam" id="PF02874">
    <property type="entry name" value="ATP-synt_ab_N"/>
    <property type="match status" value="1"/>
</dbReference>
<dbReference type="Pfam" id="PF22919">
    <property type="entry name" value="ATP-synt_VA_C"/>
    <property type="match status" value="1"/>
</dbReference>
<dbReference type="SMART" id="SM00382">
    <property type="entry name" value="AAA"/>
    <property type="match status" value="1"/>
</dbReference>
<dbReference type="SUPFAM" id="SSF47917">
    <property type="entry name" value="C-terminal domain of alpha and beta subunits of F1 ATP synthase"/>
    <property type="match status" value="1"/>
</dbReference>
<dbReference type="SUPFAM" id="SSF50615">
    <property type="entry name" value="N-terminal domain of alpha and beta subunits of F1 ATP synthase"/>
    <property type="match status" value="1"/>
</dbReference>
<dbReference type="SUPFAM" id="SSF52540">
    <property type="entry name" value="P-loop containing nucleoside triphosphate hydrolases"/>
    <property type="match status" value="1"/>
</dbReference>
<dbReference type="PROSITE" id="PS00152">
    <property type="entry name" value="ATPASE_ALPHA_BETA"/>
    <property type="match status" value="1"/>
</dbReference>
<feature type="chain" id="PRO_1000055157" description="ATP synthase subunit beta">
    <location>
        <begin position="1"/>
        <end position="459"/>
    </location>
</feature>
<feature type="binding site" evidence="1">
    <location>
        <begin position="148"/>
        <end position="155"/>
    </location>
    <ligand>
        <name>ATP</name>
        <dbReference type="ChEBI" id="CHEBI:30616"/>
    </ligand>
</feature>
<proteinExistence type="inferred from homology"/>
<accession>A1AXU2</accession>
<evidence type="ECO:0000255" key="1">
    <source>
        <dbReference type="HAMAP-Rule" id="MF_01347"/>
    </source>
</evidence>